<dbReference type="EC" id="5.4.2.12" evidence="1"/>
<dbReference type="EMBL" id="CP001399">
    <property type="protein sequence ID" value="ACP35811.1"/>
    <property type="molecule type" value="Genomic_DNA"/>
</dbReference>
<dbReference type="RefSeq" id="WP_012713908.1">
    <property type="nucleotide sequence ID" value="NC_012589.1"/>
</dbReference>
<dbReference type="SMR" id="C3MQZ8"/>
<dbReference type="GeneID" id="7807491"/>
<dbReference type="KEGG" id="sis:LS215_1815"/>
<dbReference type="HOGENOM" id="CLU_034906_2_0_2"/>
<dbReference type="OrthoDB" id="52918at2157"/>
<dbReference type="UniPathway" id="UPA00109">
    <property type="reaction ID" value="UER00186"/>
</dbReference>
<dbReference type="Proteomes" id="UP000001747">
    <property type="component" value="Chromosome"/>
</dbReference>
<dbReference type="GO" id="GO:0046872">
    <property type="term" value="F:metal ion binding"/>
    <property type="evidence" value="ECO:0007669"/>
    <property type="project" value="InterPro"/>
</dbReference>
<dbReference type="GO" id="GO:0004619">
    <property type="term" value="F:phosphoglycerate mutase activity"/>
    <property type="evidence" value="ECO:0007669"/>
    <property type="project" value="UniProtKB-EC"/>
</dbReference>
<dbReference type="GO" id="GO:0006096">
    <property type="term" value="P:glycolytic process"/>
    <property type="evidence" value="ECO:0007669"/>
    <property type="project" value="UniProtKB-UniRule"/>
</dbReference>
<dbReference type="CDD" id="cd16011">
    <property type="entry name" value="iPGM_like"/>
    <property type="match status" value="1"/>
</dbReference>
<dbReference type="Gene3D" id="3.40.720.10">
    <property type="entry name" value="Alkaline Phosphatase, subunit A"/>
    <property type="match status" value="1"/>
</dbReference>
<dbReference type="Gene3D" id="3.30.70.2130">
    <property type="entry name" value="Metalloenzyme domain"/>
    <property type="match status" value="1"/>
</dbReference>
<dbReference type="HAMAP" id="MF_01402_A">
    <property type="entry name" value="ApgM_A"/>
    <property type="match status" value="1"/>
</dbReference>
<dbReference type="InterPro" id="IPR017850">
    <property type="entry name" value="Alkaline_phosphatase_core_sf"/>
</dbReference>
<dbReference type="InterPro" id="IPR023665">
    <property type="entry name" value="ApgAM_prokaryotes"/>
</dbReference>
<dbReference type="InterPro" id="IPR006124">
    <property type="entry name" value="Metalloenzyme"/>
</dbReference>
<dbReference type="InterPro" id="IPR004456">
    <property type="entry name" value="Pglycerate_mutase_ApgM"/>
</dbReference>
<dbReference type="InterPro" id="IPR042253">
    <property type="entry name" value="Pglycerate_mutase_ApgM_sf"/>
</dbReference>
<dbReference type="NCBIfam" id="TIGR00306">
    <property type="entry name" value="apgM"/>
    <property type="match status" value="1"/>
</dbReference>
<dbReference type="NCBIfam" id="NF003104">
    <property type="entry name" value="PRK04024.1"/>
    <property type="match status" value="1"/>
</dbReference>
<dbReference type="PANTHER" id="PTHR31209">
    <property type="entry name" value="COFACTOR-INDEPENDENT PHOSPHOGLYCERATE MUTASE"/>
    <property type="match status" value="1"/>
</dbReference>
<dbReference type="PANTHER" id="PTHR31209:SF0">
    <property type="entry name" value="METALLOENZYME DOMAIN-CONTAINING PROTEIN"/>
    <property type="match status" value="1"/>
</dbReference>
<dbReference type="Pfam" id="PF01676">
    <property type="entry name" value="Metalloenzyme"/>
    <property type="match status" value="1"/>
</dbReference>
<dbReference type="Pfam" id="PF10143">
    <property type="entry name" value="PhosphMutase"/>
    <property type="match status" value="1"/>
</dbReference>
<dbReference type="PIRSF" id="PIRSF006392">
    <property type="entry name" value="IPGAM_arch"/>
    <property type="match status" value="1"/>
</dbReference>
<dbReference type="SUPFAM" id="SSF53649">
    <property type="entry name" value="Alkaline phosphatase-like"/>
    <property type="match status" value="1"/>
</dbReference>
<organism>
    <name type="scientific">Saccharolobus islandicus (strain L.S.2.15 / Lassen #1)</name>
    <name type="common">Sulfolobus islandicus</name>
    <dbReference type="NCBI Taxonomy" id="429572"/>
    <lineage>
        <taxon>Archaea</taxon>
        <taxon>Thermoproteota</taxon>
        <taxon>Thermoprotei</taxon>
        <taxon>Sulfolobales</taxon>
        <taxon>Sulfolobaceae</taxon>
        <taxon>Saccharolobus</taxon>
    </lineage>
</organism>
<accession>C3MQZ8</accession>
<keyword id="KW-0324">Glycolysis</keyword>
<keyword id="KW-0413">Isomerase</keyword>
<feature type="chain" id="PRO_1000215193" description="2,3-bisphosphoglycerate-independent phosphoglycerate mutase">
    <location>
        <begin position="1"/>
        <end position="414"/>
    </location>
</feature>
<comment type="function">
    <text evidence="1">Catalyzes the interconversion of 2-phosphoglycerate and 3-phosphoglycerate.</text>
</comment>
<comment type="catalytic activity">
    <reaction evidence="1">
        <text>(2R)-2-phosphoglycerate = (2R)-3-phosphoglycerate</text>
        <dbReference type="Rhea" id="RHEA:15901"/>
        <dbReference type="ChEBI" id="CHEBI:58272"/>
        <dbReference type="ChEBI" id="CHEBI:58289"/>
        <dbReference type="EC" id="5.4.2.12"/>
    </reaction>
</comment>
<comment type="pathway">
    <text evidence="1">Carbohydrate degradation; glycolysis; pyruvate from D-glyceraldehyde 3-phosphate: step 3/5.</text>
</comment>
<comment type="similarity">
    <text evidence="1">Belongs to the BPG-independent phosphoglycerate mutase family. A-PGAM subfamily.</text>
</comment>
<sequence>MKQYKILLIIADGLGDRPVSKLNGLTPLEAANKPAISDLLKNSMIGLMDPISPGVIPGSDTSHLSIFGLDPHVYYRGRGAFEALGAGATLKHGDVAFRGNFATVNNDLVVVDRRAGRKLEEGEELVKELNEKIKEINDVKIRFYKGTEHRVAVVLSGKGISDKVSDTDPHYEGLKVLESKPLEDSTEALRTAEIINILTRKVFDVLNSSEVNKRRIEQGEKPANIVLLRGAAHYIKLPSFSSYTKLKAAAVSATALIKGICRELGMNVVTPVGATGGIDTDYNAKAKAAIELLKENDFVFLHIKATDAASHDGLVEEKVKAIERIDKVIGTIVDNVGRDNLILMFTGDHATPVEVKEHSGDPVPILLYVPYPIINDNVRDFNEKEARKGSLRIRGLDVTNILLNYSNRAEKYGA</sequence>
<protein>
    <recommendedName>
        <fullName evidence="1">2,3-bisphosphoglycerate-independent phosphoglycerate mutase</fullName>
        <shortName evidence="1">BPG-independent PGAM</shortName>
        <shortName evidence="1">Phosphoglyceromutase</shortName>
        <shortName evidence="1">aPGAM</shortName>
        <ecNumber evidence="1">5.4.2.12</ecNumber>
    </recommendedName>
</protein>
<reference key="1">
    <citation type="journal article" date="2009" name="Proc. Natl. Acad. Sci. U.S.A.">
        <title>Biogeography of the Sulfolobus islandicus pan-genome.</title>
        <authorList>
            <person name="Reno M.L."/>
            <person name="Held N.L."/>
            <person name="Fields C.J."/>
            <person name="Burke P.V."/>
            <person name="Whitaker R.J."/>
        </authorList>
    </citation>
    <scope>NUCLEOTIDE SEQUENCE [LARGE SCALE GENOMIC DNA]</scope>
    <source>
        <strain>L.S.2.15 / Lassen #1</strain>
    </source>
</reference>
<proteinExistence type="inferred from homology"/>
<gene>
    <name evidence="1" type="primary">apgM</name>
    <name type="ordered locus">LS215_1815</name>
</gene>
<name>APGM_SACI2</name>
<evidence type="ECO:0000255" key="1">
    <source>
        <dbReference type="HAMAP-Rule" id="MF_01402"/>
    </source>
</evidence>